<feature type="chain" id="PRO_0000253538" description="PHD finger protein rhinoceros">
    <location>
        <begin position="1"/>
        <end position="3313"/>
    </location>
</feature>
<feature type="zinc finger region" description="PHD-type 1" evidence="3">
    <location>
        <begin position="323"/>
        <end position="373"/>
    </location>
</feature>
<feature type="zinc finger region" description="C2HC pre-PHD-type" evidence="4">
    <location>
        <begin position="375"/>
        <end position="409"/>
    </location>
</feature>
<feature type="zinc finger region" description="PHD-type 2; degenerate" evidence="4">
    <location>
        <begin position="433"/>
        <end position="487"/>
    </location>
</feature>
<feature type="region of interest" description="Disordered" evidence="5">
    <location>
        <begin position="1"/>
        <end position="136"/>
    </location>
</feature>
<feature type="region of interest" description="Disordered" evidence="5">
    <location>
        <begin position="453"/>
        <end position="526"/>
    </location>
</feature>
<feature type="region of interest" description="Disordered" evidence="5">
    <location>
        <begin position="708"/>
        <end position="1076"/>
    </location>
</feature>
<feature type="region of interest" description="Disordered" evidence="5">
    <location>
        <begin position="1107"/>
        <end position="1842"/>
    </location>
</feature>
<feature type="region of interest" description="Disordered" evidence="5">
    <location>
        <begin position="1961"/>
        <end position="2033"/>
    </location>
</feature>
<feature type="region of interest" description="Disordered" evidence="5">
    <location>
        <begin position="2104"/>
        <end position="2136"/>
    </location>
</feature>
<feature type="region of interest" description="Disordered" evidence="5">
    <location>
        <begin position="2145"/>
        <end position="2164"/>
    </location>
</feature>
<feature type="region of interest" description="Disordered" evidence="5">
    <location>
        <begin position="2219"/>
        <end position="2252"/>
    </location>
</feature>
<feature type="region of interest" description="Disordered" evidence="5">
    <location>
        <begin position="2353"/>
        <end position="2374"/>
    </location>
</feature>
<feature type="region of interest" description="Disordered" evidence="5">
    <location>
        <begin position="2398"/>
        <end position="2514"/>
    </location>
</feature>
<feature type="region of interest" description="Disordered" evidence="5">
    <location>
        <begin position="2563"/>
        <end position="2587"/>
    </location>
</feature>
<feature type="region of interest" description="Disordered" evidence="5">
    <location>
        <begin position="2647"/>
        <end position="2679"/>
    </location>
</feature>
<feature type="region of interest" description="Disordered" evidence="5">
    <location>
        <begin position="2827"/>
        <end position="2871"/>
    </location>
</feature>
<feature type="region of interest" description="Disordered" evidence="5">
    <location>
        <begin position="2888"/>
        <end position="2954"/>
    </location>
</feature>
<feature type="region of interest" description="Disordered" evidence="5">
    <location>
        <begin position="2978"/>
        <end position="2998"/>
    </location>
</feature>
<feature type="region of interest" description="Disordered" evidence="5">
    <location>
        <begin position="3017"/>
        <end position="3077"/>
    </location>
</feature>
<feature type="region of interest" description="Disordered" evidence="5">
    <location>
        <begin position="3144"/>
        <end position="3233"/>
    </location>
</feature>
<feature type="region of interest" description="Disordered" evidence="5">
    <location>
        <begin position="3259"/>
        <end position="3313"/>
    </location>
</feature>
<feature type="coiled-coil region" evidence="2">
    <location>
        <begin position="1744"/>
        <end position="1773"/>
    </location>
</feature>
<feature type="compositionally biased region" description="Basic residues" evidence="5">
    <location>
        <begin position="1"/>
        <end position="16"/>
    </location>
</feature>
<feature type="compositionally biased region" description="Low complexity" evidence="5">
    <location>
        <begin position="42"/>
        <end position="71"/>
    </location>
</feature>
<feature type="compositionally biased region" description="Low complexity" evidence="5">
    <location>
        <begin position="100"/>
        <end position="134"/>
    </location>
</feature>
<feature type="compositionally biased region" description="Basic and acidic residues" evidence="5">
    <location>
        <begin position="512"/>
        <end position="526"/>
    </location>
</feature>
<feature type="compositionally biased region" description="Polar residues" evidence="5">
    <location>
        <begin position="735"/>
        <end position="749"/>
    </location>
</feature>
<feature type="compositionally biased region" description="Low complexity" evidence="5">
    <location>
        <begin position="760"/>
        <end position="772"/>
    </location>
</feature>
<feature type="compositionally biased region" description="Polar residues" evidence="5">
    <location>
        <begin position="792"/>
        <end position="802"/>
    </location>
</feature>
<feature type="compositionally biased region" description="Low complexity" evidence="5">
    <location>
        <begin position="803"/>
        <end position="861"/>
    </location>
</feature>
<feature type="compositionally biased region" description="Low complexity" evidence="5">
    <location>
        <begin position="894"/>
        <end position="912"/>
    </location>
</feature>
<feature type="compositionally biased region" description="Basic and acidic residues" evidence="5">
    <location>
        <begin position="919"/>
        <end position="934"/>
    </location>
</feature>
<feature type="compositionally biased region" description="Polar residues" evidence="5">
    <location>
        <begin position="942"/>
        <end position="955"/>
    </location>
</feature>
<feature type="compositionally biased region" description="Low complexity" evidence="5">
    <location>
        <begin position="956"/>
        <end position="972"/>
    </location>
</feature>
<feature type="compositionally biased region" description="Acidic residues" evidence="5">
    <location>
        <begin position="994"/>
        <end position="1003"/>
    </location>
</feature>
<feature type="compositionally biased region" description="Low complexity" evidence="5">
    <location>
        <begin position="1015"/>
        <end position="1025"/>
    </location>
</feature>
<feature type="compositionally biased region" description="Polar residues" evidence="5">
    <location>
        <begin position="1058"/>
        <end position="1072"/>
    </location>
</feature>
<feature type="compositionally biased region" description="Basic and acidic residues" evidence="5">
    <location>
        <begin position="1159"/>
        <end position="1168"/>
    </location>
</feature>
<feature type="compositionally biased region" description="Basic and acidic residues" evidence="5">
    <location>
        <begin position="1178"/>
        <end position="1205"/>
    </location>
</feature>
<feature type="compositionally biased region" description="Low complexity" evidence="5">
    <location>
        <begin position="1250"/>
        <end position="1266"/>
    </location>
</feature>
<feature type="compositionally biased region" description="Polar residues" evidence="5">
    <location>
        <begin position="1285"/>
        <end position="1301"/>
    </location>
</feature>
<feature type="compositionally biased region" description="Low complexity" evidence="5">
    <location>
        <begin position="1308"/>
        <end position="1324"/>
    </location>
</feature>
<feature type="compositionally biased region" description="Low complexity" evidence="5">
    <location>
        <begin position="1377"/>
        <end position="1404"/>
    </location>
</feature>
<feature type="compositionally biased region" description="Low complexity" evidence="5">
    <location>
        <begin position="1451"/>
        <end position="1464"/>
    </location>
</feature>
<feature type="compositionally biased region" description="Polar residues" evidence="5">
    <location>
        <begin position="1475"/>
        <end position="1485"/>
    </location>
</feature>
<feature type="compositionally biased region" description="Basic and acidic residues" evidence="5">
    <location>
        <begin position="1551"/>
        <end position="1579"/>
    </location>
</feature>
<feature type="compositionally biased region" description="Acidic residues" evidence="5">
    <location>
        <begin position="1638"/>
        <end position="1650"/>
    </location>
</feature>
<feature type="compositionally biased region" description="Polar residues" evidence="5">
    <location>
        <begin position="1667"/>
        <end position="1678"/>
    </location>
</feature>
<feature type="compositionally biased region" description="Pro residues" evidence="5">
    <location>
        <begin position="1691"/>
        <end position="1702"/>
    </location>
</feature>
<feature type="compositionally biased region" description="Basic residues" evidence="5">
    <location>
        <begin position="1722"/>
        <end position="1734"/>
    </location>
</feature>
<feature type="compositionally biased region" description="Basic and acidic residues" evidence="5">
    <location>
        <begin position="1753"/>
        <end position="1765"/>
    </location>
</feature>
<feature type="compositionally biased region" description="Polar residues" evidence="5">
    <location>
        <begin position="1771"/>
        <end position="1781"/>
    </location>
</feature>
<feature type="compositionally biased region" description="Polar residues" evidence="5">
    <location>
        <begin position="1796"/>
        <end position="1805"/>
    </location>
</feature>
<feature type="compositionally biased region" description="Low complexity" evidence="5">
    <location>
        <begin position="1806"/>
        <end position="1819"/>
    </location>
</feature>
<feature type="compositionally biased region" description="Polar residues" evidence="5">
    <location>
        <begin position="1823"/>
        <end position="1832"/>
    </location>
</feature>
<feature type="compositionally biased region" description="Low complexity" evidence="5">
    <location>
        <begin position="1965"/>
        <end position="1984"/>
    </location>
</feature>
<feature type="compositionally biased region" description="Polar residues" evidence="5">
    <location>
        <begin position="1985"/>
        <end position="1999"/>
    </location>
</feature>
<feature type="compositionally biased region" description="Polar residues" evidence="5">
    <location>
        <begin position="2007"/>
        <end position="2018"/>
    </location>
</feature>
<feature type="compositionally biased region" description="Low complexity" evidence="5">
    <location>
        <begin position="2019"/>
        <end position="2033"/>
    </location>
</feature>
<feature type="compositionally biased region" description="Polar residues" evidence="5">
    <location>
        <begin position="2106"/>
        <end position="2118"/>
    </location>
</feature>
<feature type="compositionally biased region" description="Low complexity" evidence="5">
    <location>
        <begin position="2148"/>
        <end position="2157"/>
    </location>
</feature>
<feature type="compositionally biased region" description="Low complexity" evidence="5">
    <location>
        <begin position="2222"/>
        <end position="2242"/>
    </location>
</feature>
<feature type="compositionally biased region" description="Pro residues" evidence="5">
    <location>
        <begin position="2439"/>
        <end position="2451"/>
    </location>
</feature>
<feature type="compositionally biased region" description="Gly residues" evidence="5">
    <location>
        <begin position="2479"/>
        <end position="2488"/>
    </location>
</feature>
<feature type="compositionally biased region" description="Low complexity" evidence="5">
    <location>
        <begin position="2658"/>
        <end position="2679"/>
    </location>
</feature>
<feature type="compositionally biased region" description="Gly residues" evidence="5">
    <location>
        <begin position="2891"/>
        <end position="2900"/>
    </location>
</feature>
<feature type="compositionally biased region" description="Polar residues" evidence="5">
    <location>
        <begin position="2909"/>
        <end position="2924"/>
    </location>
</feature>
<feature type="compositionally biased region" description="Basic and acidic residues" evidence="5">
    <location>
        <begin position="2935"/>
        <end position="2946"/>
    </location>
</feature>
<feature type="compositionally biased region" description="Basic and acidic residues" evidence="5">
    <location>
        <begin position="3017"/>
        <end position="3026"/>
    </location>
</feature>
<feature type="compositionally biased region" description="Basic residues" evidence="5">
    <location>
        <begin position="3046"/>
        <end position="3065"/>
    </location>
</feature>
<feature type="compositionally biased region" description="Polar residues" evidence="5">
    <location>
        <begin position="3179"/>
        <end position="3198"/>
    </location>
</feature>
<feature type="compositionally biased region" description="Low complexity" evidence="5">
    <location>
        <begin position="3268"/>
        <end position="3290"/>
    </location>
</feature>
<feature type="compositionally biased region" description="Gly residues" evidence="5">
    <location>
        <begin position="3291"/>
        <end position="3302"/>
    </location>
</feature>
<evidence type="ECO:0000250" key="1"/>
<evidence type="ECO:0000255" key="2"/>
<evidence type="ECO:0000255" key="3">
    <source>
        <dbReference type="PROSITE-ProRule" id="PRU00146"/>
    </source>
</evidence>
<evidence type="ECO:0000255" key="4">
    <source>
        <dbReference type="PROSITE-ProRule" id="PRU01146"/>
    </source>
</evidence>
<evidence type="ECO:0000256" key="5">
    <source>
        <dbReference type="SAM" id="MobiDB-lite"/>
    </source>
</evidence>
<evidence type="ECO:0000305" key="6"/>
<dbReference type="EMBL" id="CH379070">
    <property type="protein sequence ID" value="EAL30007.2"/>
    <property type="molecule type" value="Genomic_DNA"/>
</dbReference>
<dbReference type="SMR" id="Q29EQ3"/>
<dbReference type="FunCoup" id="Q29EQ3">
    <property type="interactions" value="665"/>
</dbReference>
<dbReference type="IntAct" id="Q29EQ3">
    <property type="interactions" value="1"/>
</dbReference>
<dbReference type="STRING" id="46245.Q29EQ3"/>
<dbReference type="eggNOG" id="KOG0954">
    <property type="taxonomic scope" value="Eukaryota"/>
</dbReference>
<dbReference type="HOGENOM" id="CLU_225483_0_0_1"/>
<dbReference type="InParanoid" id="Q29EQ3"/>
<dbReference type="OMA" id="RIPWNEN"/>
<dbReference type="ChiTaRS" id="rno">
    <property type="organism name" value="fly"/>
</dbReference>
<dbReference type="Proteomes" id="UP000001819">
    <property type="component" value="Unplaced"/>
</dbReference>
<dbReference type="GO" id="GO:0005634">
    <property type="term" value="C:nucleus"/>
    <property type="evidence" value="ECO:0000250"/>
    <property type="project" value="UniProtKB"/>
</dbReference>
<dbReference type="GO" id="GO:0008270">
    <property type="term" value="F:zinc ion binding"/>
    <property type="evidence" value="ECO:0007669"/>
    <property type="project" value="UniProtKB-KW"/>
</dbReference>
<dbReference type="GO" id="GO:0042051">
    <property type="term" value="P:compound eye photoreceptor development"/>
    <property type="evidence" value="ECO:0000250"/>
    <property type="project" value="UniProtKB"/>
</dbReference>
<dbReference type="GO" id="GO:0006357">
    <property type="term" value="P:regulation of transcription by RNA polymerase II"/>
    <property type="evidence" value="ECO:0007669"/>
    <property type="project" value="TreeGrafter"/>
</dbReference>
<dbReference type="CDD" id="cd15573">
    <property type="entry name" value="PHD_JADE"/>
    <property type="match status" value="1"/>
</dbReference>
<dbReference type="FunFam" id="3.30.40.10:FF:000004">
    <property type="entry name" value="Jade family PHD finger 2"/>
    <property type="match status" value="1"/>
</dbReference>
<dbReference type="Gene3D" id="3.30.40.10">
    <property type="entry name" value="Zinc/RING finger domain, C3HC4 (zinc finger)"/>
    <property type="match status" value="2"/>
</dbReference>
<dbReference type="InterPro" id="IPR019542">
    <property type="entry name" value="Enhancer_polycomb-like_N"/>
</dbReference>
<dbReference type="InterPro" id="IPR034732">
    <property type="entry name" value="EPHD"/>
</dbReference>
<dbReference type="InterPro" id="IPR050701">
    <property type="entry name" value="Histone_Mod_Regulator"/>
</dbReference>
<dbReference type="InterPro" id="IPR019786">
    <property type="entry name" value="Zinc_finger_PHD-type_CS"/>
</dbReference>
<dbReference type="InterPro" id="IPR011011">
    <property type="entry name" value="Znf_FYVE_PHD"/>
</dbReference>
<dbReference type="InterPro" id="IPR001965">
    <property type="entry name" value="Znf_PHD"/>
</dbReference>
<dbReference type="InterPro" id="IPR019787">
    <property type="entry name" value="Znf_PHD-finger"/>
</dbReference>
<dbReference type="InterPro" id="IPR013083">
    <property type="entry name" value="Znf_RING/FYVE/PHD"/>
</dbReference>
<dbReference type="PANTHER" id="PTHR13793:SF160">
    <property type="entry name" value="PHD FINGER PROTEIN RHINOCEROS"/>
    <property type="match status" value="1"/>
</dbReference>
<dbReference type="PANTHER" id="PTHR13793">
    <property type="entry name" value="PHD FINGER PROTEINS"/>
    <property type="match status" value="1"/>
</dbReference>
<dbReference type="Pfam" id="PF10513">
    <property type="entry name" value="EPL1"/>
    <property type="match status" value="1"/>
</dbReference>
<dbReference type="Pfam" id="PF13831">
    <property type="entry name" value="PHD_2"/>
    <property type="match status" value="1"/>
</dbReference>
<dbReference type="Pfam" id="PF13832">
    <property type="entry name" value="zf-HC5HC2H_2"/>
    <property type="match status" value="1"/>
</dbReference>
<dbReference type="SMART" id="SM00249">
    <property type="entry name" value="PHD"/>
    <property type="match status" value="1"/>
</dbReference>
<dbReference type="SUPFAM" id="SSF57903">
    <property type="entry name" value="FYVE/PHD zinc finger"/>
    <property type="match status" value="1"/>
</dbReference>
<dbReference type="PROSITE" id="PS51805">
    <property type="entry name" value="EPHD"/>
    <property type="match status" value="1"/>
</dbReference>
<dbReference type="PROSITE" id="PS01359">
    <property type="entry name" value="ZF_PHD_1"/>
    <property type="match status" value="1"/>
</dbReference>
<dbReference type="PROSITE" id="PS50016">
    <property type="entry name" value="ZF_PHD_2"/>
    <property type="match status" value="1"/>
</dbReference>
<protein>
    <recommendedName>
        <fullName>PHD finger protein rhinoceros</fullName>
    </recommendedName>
</protein>
<sequence>MSQRGKRGNQHHHQSHHPPPQQQQRKDVEPQPPPTKRRKGRPPNGATTAAAAIAAAAAAAAAAAAGTATGGDRVPVIPSSNSKNEVEQELDIGGGGSGLLGAASSSSSITKSKSTKLAKSSSKSKSQGASTSSSWQARSVADIKMSSIYNRSSTEAPAELYRKDLISAMKLPDSEPLANYEYLVVADQWKQEWEKGVQVPVNPDSLPEPCVYVLPEPIVSPAHDFKLPKNRYLRITKDEHYSPELHCLTNVVALAENTCAYDIDPIDEAWLRLYNSDRAQCGAFHINETQFERVIEELEVRCWEQIQVILKQEEGLGIEFDENVICDVCRSPDSEEANEMVFCDNCNICVHQACYGITAIPSGQWLCRTCSMGITPDCVLCPNKAGAMKSNKSGKHWAHVSCALWIPEVSIGCVDRMEPITKISSIPQSRWSLVCVLCRKRVGSCIQCSKHSMSKGKKENAGGASGGGSASVTSSMHKANKYATGTGDGANEGSSACGKTGEDQRRRKNHRKNDMTSEERNQARAQRLQEVEAEFDKHVNINDISCHLFDVDDDAIVAIYNYWKLKRKSRHNRELIPPKSEDVEMIARKQEQQDLENHKLVVHLRQDLERVRNLCYMVSRREKLSRSLFKLREQVFYKQLGVLDETRLDKQQQKQDDKQRPALDMDAVIYANDGPTLYDRFYSSAGGQTVPAQYQNLEYVLEQLMGKLQSGKQGRGRASQSPNKRKQVAKASPTKKLNNGAITSRTSSPEKPAAMGKVPSTSTSTATATTAAKVRGAPPGKPLAGRRASKSGAATGTSTHNKTQSQSQSHSHIRSSASSHTSSGSSSSGDSSSPNGTSSSDSSSASDSGSESGSSSAASGISRRKSTTGSPLKKQSYARSVEQRQKQRQRRQSEAAAGASAASPNSRSATSSSEDEDEQQRRRQEPERERDGRGRGAIYNKTVPNRTQPTKSKQSTQADAGSGAGTGAAVETGAKRKLSTNTRGLAQMHKDAEESLSSDESEELLPLKNERQREAALSSGLAASGPTTGGRKMGQHIYSDSESSSSSNEKEQEEITAVESNVSDSQNQQTIRTKAAMKEFVPGTAATTTQSASSATAAASKFTKSTKEAKEGASSCKANSNAKLPYPADLLVVPQRQAAKKASENMRSTNLAATLQPDAADRMREPESHPATTIAKNKLKDSGSKQATEADKFGGGDKVRSKEQSKSTAKSAGEAIVERGKRGRPPKVPREPPAPSTSSTEKEKPPPPAEAKSTAPAAKPTAAKTSFAVSYVPQRQAAKKAAEQLKSSKPLQDTTFSTANESAEKEPAATTATTTGMTTLGVATSSPAKPSRRTSLKEAPNTPKESSANRRKSKEEAAAAAKTTTPIKRRIAAPNLSSSSSGDSDSSSSSSSSGSSSSSGSGSDSDSDSQASDAEKPRQAGKEPAPSAAAPCSTVSSNVPKRSPRKSVDKPAASAAAAAAAAATPAPPPPPQPLTARTRQNSTNKSPKRVPQKSVATVDIQDDAQSAPKTHSHRRQSSPDEGSKQVQSEQVTKRATRGSKSRPPSPVVKSSPEKQTARRKSRADESPKKIPNLEHEINQRKAASGKATSALDKMLDKKQQQINNSTPASPPRKSLTPTPTPPPARSPLPEKLQREPEPVVEPEVETEIEPATEAGELPMDIDEELTTAPTHTQLSANASKLADIIDDERPPAAPLPASPTPTPTSNDELSDAGSDLSERCRSRWRSRRRRRRRSHEPDEEHTHHTQHLLNEMEMARELEEERKNELLANASKYSASTSSPAVTVIPPDPPEIIELDSNSANSGGDQQQQQQQQPLPQQLMVHSPSSEVASTIQQQQQPPPSHQTLIDQLPVEHMPIVDTILEMEDSKFANNFASSLASVLNPPNPGQMSLLGSSLDRGEQISEEDSIQATRNLLEKLRKTKRKAQDDCCSKEAVDLLPPTPAIPSVFPFHNAADPEDIIHAQKEQQQQQQQQQQQQQQQQQQQQSCLYGNSSGPNSVASLTIKDSPMTANSGSYANSLTNTPNATPTNATMGNNLGASGGYQVNFGNSQQAPPLSCFLEKSPHQKGGCPLSNNGGAVPGATPDFVDLAAAAVKNSLGSYQAGAPVTAQSGAGSNSNKLSDYDENTRMQSPFGRMQRWNENDLIAARRSSSPSSVSESNDQPPATVAARNISQLEGCKTFFNSYASGNGGGGSAVNPTAPYSHAPLVNGIDGMSMFSNAAAPQQQTTPTHQQQQQQQQQQQQQRTPNSQFNGGIYPQLAVMMHTQSTTTESTPSLYGNGGVGVVPGVGVGVGAVPTTLPLAPPPQAPQYSGTPYTTPSLGMLPVQQQPVVPPVQVSTTPNHQFALASPVDGKIPAYPAHPAHPAHPAHPAHPAHPAQLLSSCVEAAVVSMMPPTTPVAVAAKESPNKRSSANSGSAAKKQPNKSPQLPQGKSPGKSPRQPVQPQPPTPPAPAPAVALPPSKYDPLTHTIQGKPRQRAPRGSGGSGAPGRGRGRGRGRGRGAGAASGMALPLPPPMSDYGSNTHIVNNLVGTPFEFNNYDDDITGPGVENLQSLRDRRRSFELRTTRGQPKPTPAPTAATTTNPLLHPVLPGPVDMRTYNLGFEAPHSTASQEAYQNNLLGAFDSGTADQTLSEFDEEDERQFQSALRATGTGTSPSKHPAVSAAPVAPAPAPAANSQPPANLLLHSTEANQMAPSVAATGGATHLMEGSLVEASLEATSEEVSIDSDTTIMNSKTSICDARNQLKLKIKSPLAYSGEHYGAMANSLSSSLSLSSSTLVQSSSAVQTTVSTSTVVSASSVGSGNSRRMRKKELLSLYVVQKDNLNDDSSCGLPAASDNLPLGPDFLRKSEEEEDVSTGNGNGSKRFKKNSSSRELRALDANSVLVEDQQLAGASGGGAGTASGDGRRRSACSSGSNNDNNGKTGAATSAGKRRGRSKTLESSEDDHQTPKLKIKIRGLSGSEAVASAGISNAGDSKSYSYEMTRRACPPKKRLTSNYSTPTLEEIKRDSMNYRKKVMQDFDKGEENNKQDSSGLPLDGEALMPQPPSKRPKSSKPKKDKKEKKRQKQKQLILNSSSATTTMTTTLIENTASASPGDKPKLILRINKRKTETSTKITCLEQPPVNEAPLRLKIARNLSGGGYIIGAKAEKKEDPPPDPPPDPNQPNVSPANELPLMAPLGETSPQGLLLNSFTPHSQNANASPALLGKDSGTPSPPCLVIDSSKSADVHDSTSLPESGVAAMGVPASLVGATTPLCVNVGNYENSNNSLPSASGTGSASSNSCNSNSNNNNNNGSGGGAASGGGSLLPLKKDCEVR</sequence>
<reference key="1">
    <citation type="journal article" date="2005" name="Genome Res.">
        <title>Comparative genome sequencing of Drosophila pseudoobscura: chromosomal, gene, and cis-element evolution.</title>
        <authorList>
            <person name="Richards S."/>
            <person name="Liu Y."/>
            <person name="Bettencourt B.R."/>
            <person name="Hradecky P."/>
            <person name="Letovsky S."/>
            <person name="Nielsen R."/>
            <person name="Thornton K."/>
            <person name="Hubisz M.J."/>
            <person name="Chen R."/>
            <person name="Meisel R.P."/>
            <person name="Couronne O."/>
            <person name="Hua S."/>
            <person name="Smith M.A."/>
            <person name="Zhang P."/>
            <person name="Liu J."/>
            <person name="Bussemaker H.J."/>
            <person name="van Batenburg M.F."/>
            <person name="Howells S.L."/>
            <person name="Scherer S.E."/>
            <person name="Sodergren E."/>
            <person name="Matthews B.B."/>
            <person name="Crosby M.A."/>
            <person name="Schroeder A.J."/>
            <person name="Ortiz-Barrientos D."/>
            <person name="Rives C.M."/>
            <person name="Metzker M.L."/>
            <person name="Muzny D.M."/>
            <person name="Scott G."/>
            <person name="Steffen D."/>
            <person name="Wheeler D.A."/>
            <person name="Worley K.C."/>
            <person name="Havlak P."/>
            <person name="Durbin K.J."/>
            <person name="Egan A."/>
            <person name="Gill R."/>
            <person name="Hume J."/>
            <person name="Morgan M.B."/>
            <person name="Miner G."/>
            <person name="Hamilton C."/>
            <person name="Huang Y."/>
            <person name="Waldron L."/>
            <person name="Verduzco D."/>
            <person name="Clerc-Blankenburg K.P."/>
            <person name="Dubchak I."/>
            <person name="Noor M.A.F."/>
            <person name="Anderson W."/>
            <person name="White K.P."/>
            <person name="Clark A.G."/>
            <person name="Schaeffer S.W."/>
            <person name="Gelbart W.M."/>
            <person name="Weinstock G.M."/>
            <person name="Gibbs R.A."/>
        </authorList>
    </citation>
    <scope>NUCLEOTIDE SEQUENCE [LARGE SCALE GENOMIC DNA]</scope>
    <source>
        <strain>MV2-25 / Tucson 14011-0121.94</strain>
    </source>
</reference>
<comment type="function">
    <text evidence="1">May function as a negative regulator of the EGFR/Ras/MAPK signaling pathway during eye development.</text>
</comment>
<comment type="subcellular location">
    <subcellularLocation>
        <location evidence="1">Nucleus</location>
    </subcellularLocation>
</comment>
<comment type="similarity">
    <text evidence="6">Belongs to the JADE family.</text>
</comment>
<proteinExistence type="inferred from homology"/>
<organism>
    <name type="scientific">Drosophila pseudoobscura pseudoobscura</name>
    <name type="common">Fruit fly</name>
    <dbReference type="NCBI Taxonomy" id="46245"/>
    <lineage>
        <taxon>Eukaryota</taxon>
        <taxon>Metazoa</taxon>
        <taxon>Ecdysozoa</taxon>
        <taxon>Arthropoda</taxon>
        <taxon>Hexapoda</taxon>
        <taxon>Insecta</taxon>
        <taxon>Pterygota</taxon>
        <taxon>Neoptera</taxon>
        <taxon>Endopterygota</taxon>
        <taxon>Diptera</taxon>
        <taxon>Brachycera</taxon>
        <taxon>Muscomorpha</taxon>
        <taxon>Ephydroidea</taxon>
        <taxon>Drosophilidae</taxon>
        <taxon>Drosophila</taxon>
        <taxon>Sophophora</taxon>
    </lineage>
</organism>
<gene>
    <name type="primary">rno</name>
    <name type="ORF">GA20049</name>
</gene>
<keyword id="KW-0175">Coiled coil</keyword>
<keyword id="KW-0217">Developmental protein</keyword>
<keyword id="KW-0479">Metal-binding</keyword>
<keyword id="KW-0539">Nucleus</keyword>
<keyword id="KW-1185">Reference proteome</keyword>
<keyword id="KW-0677">Repeat</keyword>
<keyword id="KW-0862">Zinc</keyword>
<keyword id="KW-0863">Zinc-finger</keyword>
<name>RNO_DROPS</name>
<accession>Q29EQ3</accession>